<dbReference type="EMBL" id="FM200053">
    <property type="protein sequence ID" value="CAR58716.1"/>
    <property type="molecule type" value="Genomic_DNA"/>
</dbReference>
<dbReference type="RefSeq" id="WP_000494192.1">
    <property type="nucleotide sequence ID" value="NC_011147.1"/>
</dbReference>
<dbReference type="SMR" id="B5BE12"/>
<dbReference type="KEGG" id="sek:SSPA0587"/>
<dbReference type="HOGENOM" id="CLU_137946_0_0_6"/>
<dbReference type="Proteomes" id="UP000001869">
    <property type="component" value="Chromosome"/>
</dbReference>
<dbReference type="GO" id="GO:0022625">
    <property type="term" value="C:cytosolic large ribosomal subunit"/>
    <property type="evidence" value="ECO:0007669"/>
    <property type="project" value="TreeGrafter"/>
</dbReference>
<dbReference type="GO" id="GO:0008097">
    <property type="term" value="F:5S rRNA binding"/>
    <property type="evidence" value="ECO:0007669"/>
    <property type="project" value="InterPro"/>
</dbReference>
<dbReference type="GO" id="GO:0003735">
    <property type="term" value="F:structural constituent of ribosome"/>
    <property type="evidence" value="ECO:0007669"/>
    <property type="project" value="InterPro"/>
</dbReference>
<dbReference type="GO" id="GO:0006412">
    <property type="term" value="P:translation"/>
    <property type="evidence" value="ECO:0007669"/>
    <property type="project" value="UniProtKB-UniRule"/>
</dbReference>
<dbReference type="CDD" id="cd00495">
    <property type="entry name" value="Ribosomal_L25_TL5_CTC"/>
    <property type="match status" value="1"/>
</dbReference>
<dbReference type="FunFam" id="2.40.240.10:FF:000002">
    <property type="entry name" value="50S ribosomal protein L25"/>
    <property type="match status" value="1"/>
</dbReference>
<dbReference type="Gene3D" id="2.40.240.10">
    <property type="entry name" value="Ribosomal Protein L25, Chain P"/>
    <property type="match status" value="1"/>
</dbReference>
<dbReference type="HAMAP" id="MF_01336">
    <property type="entry name" value="Ribosomal_bL25"/>
    <property type="match status" value="1"/>
</dbReference>
<dbReference type="InterPro" id="IPR020056">
    <property type="entry name" value="Rbsml_bL25/Gln-tRNA_synth_N"/>
</dbReference>
<dbReference type="InterPro" id="IPR011035">
    <property type="entry name" value="Ribosomal_bL25/Gln-tRNA_synth"/>
</dbReference>
<dbReference type="InterPro" id="IPR020055">
    <property type="entry name" value="Ribosomal_bL25_short"/>
</dbReference>
<dbReference type="InterPro" id="IPR029751">
    <property type="entry name" value="Ribosomal_L25_dom"/>
</dbReference>
<dbReference type="InterPro" id="IPR020930">
    <property type="entry name" value="Ribosomal_uL5_bac-type"/>
</dbReference>
<dbReference type="NCBIfam" id="NF004612">
    <property type="entry name" value="PRK05943.1"/>
    <property type="match status" value="1"/>
</dbReference>
<dbReference type="PANTHER" id="PTHR33284">
    <property type="entry name" value="RIBOSOMAL PROTEIN L25/GLN-TRNA SYNTHETASE, ANTI-CODON-BINDING DOMAIN-CONTAINING PROTEIN"/>
    <property type="match status" value="1"/>
</dbReference>
<dbReference type="PANTHER" id="PTHR33284:SF1">
    <property type="entry name" value="RIBOSOMAL PROTEIN L25_GLN-TRNA SYNTHETASE, ANTI-CODON-BINDING DOMAIN-CONTAINING PROTEIN"/>
    <property type="match status" value="1"/>
</dbReference>
<dbReference type="Pfam" id="PF01386">
    <property type="entry name" value="Ribosomal_L25p"/>
    <property type="match status" value="1"/>
</dbReference>
<dbReference type="SUPFAM" id="SSF50715">
    <property type="entry name" value="Ribosomal protein L25-like"/>
    <property type="match status" value="1"/>
</dbReference>
<organism>
    <name type="scientific">Salmonella paratyphi A (strain AKU_12601)</name>
    <dbReference type="NCBI Taxonomy" id="554290"/>
    <lineage>
        <taxon>Bacteria</taxon>
        <taxon>Pseudomonadati</taxon>
        <taxon>Pseudomonadota</taxon>
        <taxon>Gammaproteobacteria</taxon>
        <taxon>Enterobacterales</taxon>
        <taxon>Enterobacteriaceae</taxon>
        <taxon>Salmonella</taxon>
    </lineage>
</organism>
<sequence length="94" mass="10541">MFTINAEVRKEQGKGASRRLRAANKFPAIIYGGSEAPIAIELDHDQVMNMQAKAEFYSEVLTLVVDGKEVKVKAQAVQRHAYKPKLTHIDFVRA</sequence>
<gene>
    <name evidence="1" type="primary">rplY</name>
    <name type="ordered locus">SSPA0587</name>
</gene>
<reference key="1">
    <citation type="journal article" date="2009" name="BMC Genomics">
        <title>Pseudogene accumulation in the evolutionary histories of Salmonella enterica serovars Paratyphi A and Typhi.</title>
        <authorList>
            <person name="Holt K.E."/>
            <person name="Thomson N.R."/>
            <person name="Wain J."/>
            <person name="Langridge G.C."/>
            <person name="Hasan R."/>
            <person name="Bhutta Z.A."/>
            <person name="Quail M.A."/>
            <person name="Norbertczak H."/>
            <person name="Walker D."/>
            <person name="Simmonds M."/>
            <person name="White B."/>
            <person name="Bason N."/>
            <person name="Mungall K."/>
            <person name="Dougan G."/>
            <person name="Parkhill J."/>
        </authorList>
    </citation>
    <scope>NUCLEOTIDE SEQUENCE [LARGE SCALE GENOMIC DNA]</scope>
    <source>
        <strain>AKU_12601</strain>
    </source>
</reference>
<proteinExistence type="inferred from homology"/>
<accession>B5BE12</accession>
<keyword id="KW-0687">Ribonucleoprotein</keyword>
<keyword id="KW-0689">Ribosomal protein</keyword>
<keyword id="KW-0694">RNA-binding</keyword>
<keyword id="KW-0699">rRNA-binding</keyword>
<evidence type="ECO:0000255" key="1">
    <source>
        <dbReference type="HAMAP-Rule" id="MF_01336"/>
    </source>
</evidence>
<evidence type="ECO:0000305" key="2"/>
<protein>
    <recommendedName>
        <fullName evidence="1">Large ribosomal subunit protein bL25</fullName>
    </recommendedName>
    <alternativeName>
        <fullName evidence="2">50S ribosomal protein L25</fullName>
    </alternativeName>
</protein>
<feature type="chain" id="PRO_1000142595" description="Large ribosomal subunit protein bL25">
    <location>
        <begin position="1"/>
        <end position="94"/>
    </location>
</feature>
<name>RL25_SALPK</name>
<comment type="function">
    <text evidence="1">This is one of the proteins that binds to the 5S RNA in the ribosome where it forms part of the central protuberance.</text>
</comment>
<comment type="subunit">
    <text evidence="1">Part of the 50S ribosomal subunit; part of the 5S rRNA/L5/L18/L25 subcomplex. Contacts the 5S rRNA. Binds to the 5S rRNA independently of L5 and L18.</text>
</comment>
<comment type="similarity">
    <text evidence="1">Belongs to the bacterial ribosomal protein bL25 family.</text>
</comment>